<dbReference type="EC" id="2.7.7.60" evidence="1"/>
<dbReference type="EMBL" id="CP000576">
    <property type="protein sequence ID" value="ABO17102.1"/>
    <property type="molecule type" value="Genomic_DNA"/>
</dbReference>
<dbReference type="RefSeq" id="WP_011862477.1">
    <property type="nucleotide sequence ID" value="NC_009091.1"/>
</dbReference>
<dbReference type="SMR" id="A3PBH7"/>
<dbReference type="STRING" id="167546.P9301_04791"/>
<dbReference type="KEGG" id="pmg:P9301_04791"/>
<dbReference type="eggNOG" id="COG1211">
    <property type="taxonomic scope" value="Bacteria"/>
</dbReference>
<dbReference type="HOGENOM" id="CLU_061281_1_0_3"/>
<dbReference type="OrthoDB" id="9806837at2"/>
<dbReference type="UniPathway" id="UPA00056">
    <property type="reaction ID" value="UER00093"/>
</dbReference>
<dbReference type="Proteomes" id="UP000001430">
    <property type="component" value="Chromosome"/>
</dbReference>
<dbReference type="GO" id="GO:0050518">
    <property type="term" value="F:2-C-methyl-D-erythritol 4-phosphate cytidylyltransferase activity"/>
    <property type="evidence" value="ECO:0007669"/>
    <property type="project" value="UniProtKB-UniRule"/>
</dbReference>
<dbReference type="GO" id="GO:0019288">
    <property type="term" value="P:isopentenyl diphosphate biosynthetic process, methylerythritol 4-phosphate pathway"/>
    <property type="evidence" value="ECO:0007669"/>
    <property type="project" value="UniProtKB-UniRule"/>
</dbReference>
<dbReference type="CDD" id="cd02516">
    <property type="entry name" value="CDP-ME_synthetase"/>
    <property type="match status" value="1"/>
</dbReference>
<dbReference type="FunFam" id="3.90.550.10:FF:000003">
    <property type="entry name" value="2-C-methyl-D-erythritol 4-phosphate cytidylyltransferase"/>
    <property type="match status" value="1"/>
</dbReference>
<dbReference type="Gene3D" id="3.90.550.10">
    <property type="entry name" value="Spore Coat Polysaccharide Biosynthesis Protein SpsA, Chain A"/>
    <property type="match status" value="1"/>
</dbReference>
<dbReference type="HAMAP" id="MF_00108">
    <property type="entry name" value="IspD"/>
    <property type="match status" value="1"/>
</dbReference>
<dbReference type="InterPro" id="IPR001228">
    <property type="entry name" value="IspD"/>
</dbReference>
<dbReference type="InterPro" id="IPR034683">
    <property type="entry name" value="IspD/TarI"/>
</dbReference>
<dbReference type="InterPro" id="IPR050088">
    <property type="entry name" value="IspD/TarI_cytidylyltransf_bact"/>
</dbReference>
<dbReference type="InterPro" id="IPR018294">
    <property type="entry name" value="ISPD_synthase_CS"/>
</dbReference>
<dbReference type="InterPro" id="IPR029044">
    <property type="entry name" value="Nucleotide-diphossugar_trans"/>
</dbReference>
<dbReference type="NCBIfam" id="TIGR00453">
    <property type="entry name" value="ispD"/>
    <property type="match status" value="1"/>
</dbReference>
<dbReference type="PANTHER" id="PTHR32125">
    <property type="entry name" value="2-C-METHYL-D-ERYTHRITOL 4-PHOSPHATE CYTIDYLYLTRANSFERASE, CHLOROPLASTIC"/>
    <property type="match status" value="1"/>
</dbReference>
<dbReference type="PANTHER" id="PTHR32125:SF4">
    <property type="entry name" value="2-C-METHYL-D-ERYTHRITOL 4-PHOSPHATE CYTIDYLYLTRANSFERASE, CHLOROPLASTIC"/>
    <property type="match status" value="1"/>
</dbReference>
<dbReference type="Pfam" id="PF01128">
    <property type="entry name" value="IspD"/>
    <property type="match status" value="1"/>
</dbReference>
<dbReference type="SUPFAM" id="SSF53448">
    <property type="entry name" value="Nucleotide-diphospho-sugar transferases"/>
    <property type="match status" value="1"/>
</dbReference>
<dbReference type="PROSITE" id="PS01295">
    <property type="entry name" value="ISPD"/>
    <property type="match status" value="1"/>
</dbReference>
<sequence>MHFLIPAAGSGSRMKAGKNKLLIDLEGESLIYWTLKSVFSASSTNWVGIIGQPKDKNLLLNSTKDFAHKVHWINGGDTRQQSVFNGLKALPKDAEKVLIHDGARCLINPELIDLCAKQLDENEAVILATKVTDTIKIVDNEGFIKETPDRNYLWAAQTPQGFLVDRLKKAHKMAIDKNWNVTDDASLFEMLNWKVKIIEGTYSNIKITSPIDLKIAKLFVKNP</sequence>
<keyword id="KW-0414">Isoprene biosynthesis</keyword>
<keyword id="KW-0548">Nucleotidyltransferase</keyword>
<keyword id="KW-1185">Reference proteome</keyword>
<keyword id="KW-0808">Transferase</keyword>
<feature type="chain" id="PRO_1000022935" description="2-C-methyl-D-erythritol 4-phosphate cytidylyltransferase">
    <location>
        <begin position="1"/>
        <end position="223"/>
    </location>
</feature>
<feature type="site" description="Transition state stabilizer" evidence="1">
    <location>
        <position position="13"/>
    </location>
</feature>
<feature type="site" description="Transition state stabilizer" evidence="1">
    <location>
        <position position="20"/>
    </location>
</feature>
<feature type="site" description="Positions MEP for the nucleophilic attack" evidence="1">
    <location>
        <position position="150"/>
    </location>
</feature>
<feature type="site" description="Positions MEP for the nucleophilic attack" evidence="1">
    <location>
        <position position="206"/>
    </location>
</feature>
<name>ISPD_PROM0</name>
<protein>
    <recommendedName>
        <fullName evidence="1">2-C-methyl-D-erythritol 4-phosphate cytidylyltransferase</fullName>
        <ecNumber evidence="1">2.7.7.60</ecNumber>
    </recommendedName>
    <alternativeName>
        <fullName evidence="1">4-diphosphocytidyl-2C-methyl-D-erythritol synthase</fullName>
    </alternativeName>
    <alternativeName>
        <fullName evidence="1">MEP cytidylyltransferase</fullName>
        <shortName evidence="1">MCT</shortName>
    </alternativeName>
</protein>
<accession>A3PBH7</accession>
<reference key="1">
    <citation type="journal article" date="2007" name="PLoS Genet.">
        <title>Patterns and implications of gene gain and loss in the evolution of Prochlorococcus.</title>
        <authorList>
            <person name="Kettler G.C."/>
            <person name="Martiny A.C."/>
            <person name="Huang K."/>
            <person name="Zucker J."/>
            <person name="Coleman M.L."/>
            <person name="Rodrigue S."/>
            <person name="Chen F."/>
            <person name="Lapidus A."/>
            <person name="Ferriera S."/>
            <person name="Johnson J."/>
            <person name="Steglich C."/>
            <person name="Church G.M."/>
            <person name="Richardson P."/>
            <person name="Chisholm S.W."/>
        </authorList>
    </citation>
    <scope>NUCLEOTIDE SEQUENCE [LARGE SCALE GENOMIC DNA]</scope>
    <source>
        <strain>MIT 9301</strain>
    </source>
</reference>
<comment type="function">
    <text evidence="1">Catalyzes the formation of 4-diphosphocytidyl-2-C-methyl-D-erythritol from CTP and 2-C-methyl-D-erythritol 4-phosphate (MEP).</text>
</comment>
<comment type="catalytic activity">
    <reaction evidence="1">
        <text>2-C-methyl-D-erythritol 4-phosphate + CTP + H(+) = 4-CDP-2-C-methyl-D-erythritol + diphosphate</text>
        <dbReference type="Rhea" id="RHEA:13429"/>
        <dbReference type="ChEBI" id="CHEBI:15378"/>
        <dbReference type="ChEBI" id="CHEBI:33019"/>
        <dbReference type="ChEBI" id="CHEBI:37563"/>
        <dbReference type="ChEBI" id="CHEBI:57823"/>
        <dbReference type="ChEBI" id="CHEBI:58262"/>
        <dbReference type="EC" id="2.7.7.60"/>
    </reaction>
</comment>
<comment type="pathway">
    <text evidence="1">Isoprenoid biosynthesis; isopentenyl diphosphate biosynthesis via DXP pathway; isopentenyl diphosphate from 1-deoxy-D-xylulose 5-phosphate: step 2/6.</text>
</comment>
<comment type="similarity">
    <text evidence="1">Belongs to the IspD/TarI cytidylyltransferase family. IspD subfamily.</text>
</comment>
<organism>
    <name type="scientific">Prochlorococcus marinus (strain MIT 9301)</name>
    <dbReference type="NCBI Taxonomy" id="167546"/>
    <lineage>
        <taxon>Bacteria</taxon>
        <taxon>Bacillati</taxon>
        <taxon>Cyanobacteriota</taxon>
        <taxon>Cyanophyceae</taxon>
        <taxon>Synechococcales</taxon>
        <taxon>Prochlorococcaceae</taxon>
        <taxon>Prochlorococcus</taxon>
    </lineage>
</organism>
<gene>
    <name evidence="1" type="primary">ispD</name>
    <name type="ordered locus">P9301_04791</name>
</gene>
<proteinExistence type="inferred from homology"/>
<evidence type="ECO:0000255" key="1">
    <source>
        <dbReference type="HAMAP-Rule" id="MF_00108"/>
    </source>
</evidence>